<sequence>MNGTEGPDFYVPMVNTTGIVRSPYDYPQYYLVNPAAFSMLAAYMFFLILVGFPVNFLTLYVTMEHKKLRTPLNYILLNLAVANLFMVIGGFTTTMYTSMHGYFVLGRTGCNLEGFFATLGGEIALWSLVVLAVERWVVVCKPISNFRFGENHAVMGVSFTWLMACACSVPPLFGWSRYIPEGMQCSCGIDYYTRAPGYNNESFVIYMFVCHFSIPLTIIFFCYGRLLCAVKDAAAAQQESETTQRAEREVSRMVVIMVIGFLICWLPYASVAWFIFTHQGSEFGPVFMTIPAFFAKSSAIYNPMIYICMNKQFRHCMITTLCCGKNPFEEEEGASTTASKTEASSVSSSHVSPA</sequence>
<dbReference type="EMBL" id="Y14484">
    <property type="protein sequence ID" value="CAA74832.1"/>
    <property type="molecule type" value="Genomic_DNA"/>
</dbReference>
<dbReference type="SMR" id="O42604"/>
<dbReference type="GlyCosmos" id="O42604">
    <property type="glycosylation" value="2 sites, No reported glycans"/>
</dbReference>
<dbReference type="GO" id="GO:0016020">
    <property type="term" value="C:membrane"/>
    <property type="evidence" value="ECO:0000250"/>
    <property type="project" value="UniProtKB"/>
</dbReference>
<dbReference type="GO" id="GO:0097381">
    <property type="term" value="C:photoreceptor disc membrane"/>
    <property type="evidence" value="ECO:0000250"/>
    <property type="project" value="UniProtKB"/>
</dbReference>
<dbReference type="GO" id="GO:0005886">
    <property type="term" value="C:plasma membrane"/>
    <property type="evidence" value="ECO:0000250"/>
    <property type="project" value="UniProtKB"/>
</dbReference>
<dbReference type="GO" id="GO:0005502">
    <property type="term" value="F:11-cis retinal binding"/>
    <property type="evidence" value="ECO:0000250"/>
    <property type="project" value="UniProtKB"/>
</dbReference>
<dbReference type="GO" id="GO:0008020">
    <property type="term" value="F:G protein-coupled photoreceptor activity"/>
    <property type="evidence" value="ECO:0000250"/>
    <property type="project" value="UniProtKB"/>
</dbReference>
<dbReference type="GO" id="GO:0016038">
    <property type="term" value="P:absorption of visible light"/>
    <property type="evidence" value="ECO:0000250"/>
    <property type="project" value="UniProtKB"/>
</dbReference>
<dbReference type="GO" id="GO:0016056">
    <property type="term" value="P:G protein-coupled opsin signaling pathway"/>
    <property type="evidence" value="ECO:0000250"/>
    <property type="project" value="UniProtKB"/>
</dbReference>
<dbReference type="GO" id="GO:0007601">
    <property type="term" value="P:visual perception"/>
    <property type="evidence" value="ECO:0007669"/>
    <property type="project" value="UniProtKB-KW"/>
</dbReference>
<dbReference type="CDD" id="cd15080">
    <property type="entry name" value="7tmA_MWS_opsin"/>
    <property type="match status" value="1"/>
</dbReference>
<dbReference type="FunFam" id="1.20.1070.10:FF:000018">
    <property type="entry name" value="Rhodopsin"/>
    <property type="match status" value="1"/>
</dbReference>
<dbReference type="Gene3D" id="1.20.1070.10">
    <property type="entry name" value="Rhodopsin 7-helix transmembrane proteins"/>
    <property type="match status" value="1"/>
</dbReference>
<dbReference type="InterPro" id="IPR050125">
    <property type="entry name" value="GPCR_opsins"/>
</dbReference>
<dbReference type="InterPro" id="IPR000276">
    <property type="entry name" value="GPCR_Rhodpsn"/>
</dbReference>
<dbReference type="InterPro" id="IPR017452">
    <property type="entry name" value="GPCR_Rhodpsn_7TM"/>
</dbReference>
<dbReference type="InterPro" id="IPR001760">
    <property type="entry name" value="Opsin"/>
</dbReference>
<dbReference type="InterPro" id="IPR027430">
    <property type="entry name" value="Retinal_BS"/>
</dbReference>
<dbReference type="InterPro" id="IPR000732">
    <property type="entry name" value="Rhodopsin"/>
</dbReference>
<dbReference type="InterPro" id="IPR019477">
    <property type="entry name" value="Rhodopsin_N"/>
</dbReference>
<dbReference type="PANTHER" id="PTHR24240">
    <property type="entry name" value="OPSIN"/>
    <property type="match status" value="1"/>
</dbReference>
<dbReference type="Pfam" id="PF00001">
    <property type="entry name" value="7tm_1"/>
    <property type="match status" value="1"/>
</dbReference>
<dbReference type="Pfam" id="PF10413">
    <property type="entry name" value="Rhodopsin_N"/>
    <property type="match status" value="1"/>
</dbReference>
<dbReference type="PRINTS" id="PR00237">
    <property type="entry name" value="GPCRRHODOPSN"/>
</dbReference>
<dbReference type="PRINTS" id="PR00238">
    <property type="entry name" value="OPSIN"/>
</dbReference>
<dbReference type="PRINTS" id="PR00579">
    <property type="entry name" value="RHODOPSIN"/>
</dbReference>
<dbReference type="SUPFAM" id="SSF81321">
    <property type="entry name" value="Family A G protein-coupled receptor-like"/>
    <property type="match status" value="1"/>
</dbReference>
<dbReference type="PROSITE" id="PS00237">
    <property type="entry name" value="G_PROTEIN_RECEP_F1_1"/>
    <property type="match status" value="1"/>
</dbReference>
<dbReference type="PROSITE" id="PS50262">
    <property type="entry name" value="G_PROTEIN_RECEP_F1_2"/>
    <property type="match status" value="1"/>
</dbReference>
<dbReference type="PROSITE" id="PS00238">
    <property type="entry name" value="OPSIN"/>
    <property type="match status" value="1"/>
</dbReference>
<comment type="function">
    <text evidence="2 3 4 8">Photoreceptor required for image-forming vision at low light intensity. While most salt water fish species use retinal as chromophore, most freshwater fish use 3-dehydroretinal, or a mixture of retinal and 3-dehydroretinal (PubMed:18422881). Light-induced isomerization of 11-cis to all-trans retinal triggers a conformational change that activates signaling via G-proteins. Subsequent receptor phosphorylation mediates displacement of the bound G-protein alpha subunit by arrestin and terminates signaling (By similarity).</text>
</comment>
<comment type="subcellular location">
    <subcellularLocation>
        <location evidence="3">Membrane</location>
        <topology evidence="3">Multi-pass membrane protein</topology>
    </subcellularLocation>
    <subcellularLocation>
        <location evidence="5">Cell projection</location>
        <location evidence="5">Cilium</location>
        <location evidence="5">Photoreceptor outer segment</location>
    </subcellularLocation>
    <text evidence="3">Synthesized in the inner segment (IS) of rod photoreceptor cells before vectorial transport to disk membranes in the rod outer segment (OS) photosensory cilia.</text>
</comment>
<comment type="PTM">
    <text evidence="2">Phosphorylated on some or all of the serine and threonine residues present in the C-terminal region.</text>
</comment>
<comment type="PTM">
    <text evidence="2">Contains one covalently linked retinal chromophore.</text>
</comment>
<comment type="similarity">
    <text evidence="6">Belongs to the G-protein coupled receptor 1 family. Opsin subfamily.</text>
</comment>
<reference key="1">
    <citation type="submission" date="1997-08" db="EMBL/GenBank/DDBJ databases">
        <authorList>
            <person name="Archer S.N."/>
            <person name="Hirano J."/>
        </authorList>
    </citation>
    <scope>NUCLEOTIDE SEQUENCE [GENOMIC DNA]</scope>
    <source>
        <tissue>Liver</tissue>
    </source>
</reference>
<reference key="2">
    <citation type="journal article" date="2008" name="Photochem. Photobiol.">
        <title>Presence of rhodopsin and porphyropsin in the eyes of 164 fishes, representing marine, diadromous, coastal and freshwater species--a qualitative and comparative study.</title>
        <authorList>
            <person name="Toyama M."/>
            <person name="Hironaka M."/>
            <person name="Yamahama Y."/>
            <person name="Horiguchi H."/>
            <person name="Tsukada O."/>
            <person name="Uto N."/>
            <person name="Ueno Y."/>
            <person name="Tokunaga F."/>
            <person name="Seno K."/>
            <person name="Hariyama T."/>
        </authorList>
    </citation>
    <scope>RETINAL-BINDING</scope>
    <scope>FUNCTION</scope>
</reference>
<feature type="chain" id="PRO_0000197728" description="Rhodopsin">
    <location>
        <begin position="1"/>
        <end position="354"/>
    </location>
</feature>
<feature type="topological domain" description="Extracellular" evidence="9">
    <location>
        <begin position="1"/>
        <end position="36"/>
    </location>
</feature>
<feature type="transmembrane region" description="Helical; Name=1" evidence="2">
    <location>
        <begin position="37"/>
        <end position="61"/>
    </location>
</feature>
<feature type="topological domain" description="Cytoplasmic" evidence="9">
    <location>
        <begin position="62"/>
        <end position="73"/>
    </location>
</feature>
<feature type="transmembrane region" description="Helical; Name=2" evidence="2">
    <location>
        <begin position="74"/>
        <end position="96"/>
    </location>
</feature>
<feature type="topological domain" description="Extracellular" evidence="9">
    <location>
        <begin position="97"/>
        <end position="110"/>
    </location>
</feature>
<feature type="transmembrane region" description="Helical; Name=3" evidence="2">
    <location>
        <begin position="111"/>
        <end position="133"/>
    </location>
</feature>
<feature type="topological domain" description="Cytoplasmic" evidence="9">
    <location>
        <begin position="134"/>
        <end position="152"/>
    </location>
</feature>
<feature type="transmembrane region" description="Helical; Name=4" evidence="2">
    <location>
        <begin position="153"/>
        <end position="173"/>
    </location>
</feature>
<feature type="topological domain" description="Extracellular" evidence="9">
    <location>
        <begin position="174"/>
        <end position="202"/>
    </location>
</feature>
<feature type="transmembrane region" description="Helical; Name=5" evidence="2">
    <location>
        <begin position="203"/>
        <end position="224"/>
    </location>
</feature>
<feature type="topological domain" description="Cytoplasmic" evidence="9">
    <location>
        <begin position="225"/>
        <end position="252"/>
    </location>
</feature>
<feature type="transmembrane region" description="Helical; Name=6" evidence="2">
    <location>
        <begin position="253"/>
        <end position="274"/>
    </location>
</feature>
<feature type="topological domain" description="Extracellular" evidence="9">
    <location>
        <begin position="275"/>
        <end position="286"/>
    </location>
</feature>
<feature type="transmembrane region" description="Helical; Name=7" evidence="2">
    <location>
        <begin position="287"/>
        <end position="308"/>
    </location>
</feature>
<feature type="topological domain" description="Cytoplasmic" evidence="9">
    <location>
        <begin position="309"/>
        <end position="354"/>
    </location>
</feature>
<feature type="region of interest" description="Disordered" evidence="7">
    <location>
        <begin position="333"/>
        <end position="354"/>
    </location>
</feature>
<feature type="short sequence motif" description="'Ionic lock' involved in activated form stabilization" evidence="2">
    <location>
        <begin position="134"/>
        <end position="136"/>
    </location>
</feature>
<feature type="compositionally biased region" description="Low complexity" evidence="7">
    <location>
        <begin position="334"/>
        <end position="354"/>
    </location>
</feature>
<feature type="site" description="Plays an important role in the conformation switch to the active conformation" evidence="2">
    <location>
        <position position="113"/>
    </location>
</feature>
<feature type="modified residue" description="N6-(retinylidene)lysine" evidence="2">
    <location>
        <position position="296"/>
    </location>
</feature>
<feature type="lipid moiety-binding region" description="S-palmitoyl cysteine" evidence="2">
    <location>
        <position position="322"/>
    </location>
</feature>
<feature type="lipid moiety-binding region" description="S-palmitoyl cysteine" evidence="2">
    <location>
        <position position="323"/>
    </location>
</feature>
<feature type="glycosylation site" description="N-linked (GlcNAc...) asparagine" evidence="1">
    <location>
        <position position="2"/>
    </location>
</feature>
<feature type="glycosylation site" description="N-linked (GlcNAc...) asparagine" evidence="1">
    <location>
        <position position="15"/>
    </location>
</feature>
<feature type="disulfide bond" evidence="6">
    <location>
        <begin position="110"/>
        <end position="187"/>
    </location>
</feature>
<organism>
    <name type="scientific">Zeus faber</name>
    <name type="common">John Dory</name>
    <dbReference type="NCBI Taxonomy" id="64108"/>
    <lineage>
        <taxon>Eukaryota</taxon>
        <taxon>Metazoa</taxon>
        <taxon>Chordata</taxon>
        <taxon>Craniata</taxon>
        <taxon>Vertebrata</taxon>
        <taxon>Euteleostomi</taxon>
        <taxon>Actinopterygii</taxon>
        <taxon>Neopterygii</taxon>
        <taxon>Teleostei</taxon>
        <taxon>Neoteleostei</taxon>
        <taxon>Acanthomorphata</taxon>
        <taxon>Zeiogadaria</taxon>
        <taxon>Zeariae</taxon>
        <taxon>Zeiformes</taxon>
        <taxon>Zeidae</taxon>
        <taxon>Zeus</taxon>
    </lineage>
</organism>
<evidence type="ECO:0000250" key="1"/>
<evidence type="ECO:0000250" key="2">
    <source>
        <dbReference type="UniProtKB" id="P02699"/>
    </source>
</evidence>
<evidence type="ECO:0000250" key="3">
    <source>
        <dbReference type="UniProtKB" id="P08100"/>
    </source>
</evidence>
<evidence type="ECO:0000250" key="4">
    <source>
        <dbReference type="UniProtKB" id="P32309"/>
    </source>
</evidence>
<evidence type="ECO:0000250" key="5">
    <source>
        <dbReference type="UniProtKB" id="P35359"/>
    </source>
</evidence>
<evidence type="ECO:0000255" key="6">
    <source>
        <dbReference type="PROSITE-ProRule" id="PRU00521"/>
    </source>
</evidence>
<evidence type="ECO:0000256" key="7">
    <source>
        <dbReference type="SAM" id="MobiDB-lite"/>
    </source>
</evidence>
<evidence type="ECO:0000269" key="8">
    <source>
    </source>
</evidence>
<evidence type="ECO:0000305" key="9"/>
<proteinExistence type="evidence at protein level"/>
<gene>
    <name type="primary">rho</name>
</gene>
<keyword id="KW-0966">Cell projection</keyword>
<keyword id="KW-0157">Chromophore</keyword>
<keyword id="KW-1015">Disulfide bond</keyword>
<keyword id="KW-0297">G-protein coupled receptor</keyword>
<keyword id="KW-0325">Glycoprotein</keyword>
<keyword id="KW-0449">Lipoprotein</keyword>
<keyword id="KW-0472">Membrane</keyword>
<keyword id="KW-0564">Palmitate</keyword>
<keyword id="KW-0597">Phosphoprotein</keyword>
<keyword id="KW-0600">Photoreceptor protein</keyword>
<keyword id="KW-0675">Receptor</keyword>
<keyword id="KW-0681">Retinal protein</keyword>
<keyword id="KW-0716">Sensory transduction</keyword>
<keyword id="KW-0807">Transducer</keyword>
<keyword id="KW-0812">Transmembrane</keyword>
<keyword id="KW-1133">Transmembrane helix</keyword>
<keyword id="KW-0844">Vision</keyword>
<protein>
    <recommendedName>
        <fullName>Rhodopsin</fullName>
    </recommendedName>
</protein>
<name>OPSD_ZEUFA</name>
<accession>O42604</accession>